<keyword id="KW-1015">Disulfide bond</keyword>
<keyword id="KW-0872">Ion channel impairing toxin</keyword>
<keyword id="KW-0528">Neurotoxin</keyword>
<keyword id="KW-0632">Potassium channel impairing toxin</keyword>
<keyword id="KW-0964">Secreted</keyword>
<keyword id="KW-0732">Signal</keyword>
<keyword id="KW-0800">Toxin</keyword>
<comment type="function">
    <text>Potential blocker of potassium channels.</text>
</comment>
<comment type="subcellular location">
    <subcellularLocation>
        <location>Secreted</location>
    </subcellularLocation>
</comment>
<comment type="tissue specificity">
    <text>Expressed by the venom gland.</text>
</comment>
<comment type="domain">
    <text evidence="3">Has the structural arrangement of an alpha-helix connected to antiparallel beta-sheets by disulfide bonds (CS-alpha/beta).</text>
</comment>
<comment type="PTM">
    <text evidence="1">Probably has three disulfide bridges.</text>
</comment>
<comment type="similarity">
    <text evidence="3">Belongs to the short scorpion toxin superfamily. Potassium channel inhibitor family. Alpha-KTx 14 subfamily.</text>
</comment>
<protein>
    <recommendedName>
        <fullName>Potassium channel toxin alpha-KTx 14.1</fullName>
    </recommendedName>
    <alternativeName>
        <fullName>BmKK1</fullName>
    </alternativeName>
    <alternativeName>
        <fullName>Toxin Kk1</fullName>
    </alternativeName>
</protein>
<dbReference type="EMBL" id="AJ277726">
    <property type="protein sequence ID" value="CAC38035.1"/>
    <property type="molecule type" value="mRNA"/>
</dbReference>
<dbReference type="SMR" id="Q967F9"/>
<dbReference type="GO" id="GO:0005576">
    <property type="term" value="C:extracellular region"/>
    <property type="evidence" value="ECO:0007669"/>
    <property type="project" value="UniProtKB-SubCell"/>
</dbReference>
<dbReference type="GO" id="GO:0015459">
    <property type="term" value="F:potassium channel regulator activity"/>
    <property type="evidence" value="ECO:0007669"/>
    <property type="project" value="UniProtKB-KW"/>
</dbReference>
<dbReference type="GO" id="GO:0090729">
    <property type="term" value="F:toxin activity"/>
    <property type="evidence" value="ECO:0007669"/>
    <property type="project" value="UniProtKB-KW"/>
</dbReference>
<dbReference type="InterPro" id="IPR036574">
    <property type="entry name" value="Scorpion_toxin-like_sf"/>
</dbReference>
<dbReference type="SUPFAM" id="SSF57095">
    <property type="entry name" value="Scorpion toxin-like"/>
    <property type="match status" value="1"/>
</dbReference>
<proteinExistence type="evidence at transcript level"/>
<reference key="1">
    <citation type="journal article" date="2001" name="Biochimie">
        <title>Molecular cloning and characterization of four scorpion K(+)-toxin-like peptides: a new subfamily of venom peptides (alpha-KTx14) and genomic analysis of a member.</title>
        <authorList>
            <person name="Zeng X.-C."/>
            <person name="Peng F."/>
            <person name="Luo F."/>
            <person name="Zhu S.-Y."/>
            <person name="Liu H."/>
            <person name="Li W.-X."/>
        </authorList>
    </citation>
    <scope>NUCLEOTIDE SEQUENCE [MRNA]</scope>
    <source>
        <strain>Hubei</strain>
        <tissue>Venom gland</tissue>
    </source>
</reference>
<sequence length="54" mass="5776">MKIFFAILLILAVCSMAIWTVNGTPFAIKCATDADCSRKCPGNPSCRNGFCACT</sequence>
<accession>Q967F9</accession>
<organism>
    <name type="scientific">Olivierus martensii</name>
    <name type="common">Manchurian scorpion</name>
    <name type="synonym">Mesobuthus martensii</name>
    <dbReference type="NCBI Taxonomy" id="34649"/>
    <lineage>
        <taxon>Eukaryota</taxon>
        <taxon>Metazoa</taxon>
        <taxon>Ecdysozoa</taxon>
        <taxon>Arthropoda</taxon>
        <taxon>Chelicerata</taxon>
        <taxon>Arachnida</taxon>
        <taxon>Scorpiones</taxon>
        <taxon>Buthida</taxon>
        <taxon>Buthoidea</taxon>
        <taxon>Buthidae</taxon>
        <taxon>Olivierus</taxon>
    </lineage>
</organism>
<name>KA141_OLIMR</name>
<feature type="signal peptide" evidence="2">
    <location>
        <begin position="1"/>
        <end position="23"/>
    </location>
</feature>
<feature type="chain" id="PRO_0000035333" description="Potassium channel toxin alpha-KTx 14.1">
    <location>
        <begin position="24"/>
        <end position="54"/>
    </location>
</feature>
<evidence type="ECO:0000250" key="1"/>
<evidence type="ECO:0000255" key="2"/>
<evidence type="ECO:0000305" key="3"/>